<sequence length="370" mass="43183">MAFRRRTKSYPLFSQEFIIHNHADIGFCLVLCVLIGLMFEVTAKTAFLFILPQYNISVPTADSETVHYHYGPKDLVTILFYVVITIIFHAVVQEYILDKISKRLHLSKVKHSKFNESGQLLVFHLSAVAWCFYVIVTEGYLTNPRSLWEDYPHVYLSFQVKFFYLGQLAYWLHSLPELYFQKVRKEEVPRQLQYICLYLLHITGAYLLNLSRLGLILLLLQYSTEALFHMARLFHFADENNERLFNAWAAVFGVTRLFILTLAVLTIGFGLARVENQVFDPEKGNFNTLPCRLGMLLLVCVAQAWLMWRFIHSQLRHWREYWKEQSAKRRVSAVPRPPAKLLKREPGYHENGVVKAENGTSSRTKKLKSP</sequence>
<dbReference type="EMBL" id="AY029530">
    <property type="protein sequence ID" value="AAK40298.1"/>
    <property type="molecule type" value="mRNA"/>
</dbReference>
<dbReference type="EMBL" id="AK082751">
    <property type="protein sequence ID" value="BAC38601.1"/>
    <property type="molecule type" value="mRNA"/>
</dbReference>
<dbReference type="EMBL" id="BC018212">
    <property type="protein sequence ID" value="AAH18212.1"/>
    <property type="molecule type" value="mRNA"/>
</dbReference>
<dbReference type="CCDS" id="CCDS14846.1"/>
<dbReference type="RefSeq" id="NP_803128.1">
    <property type="nucleotide sequence ID" value="NM_177409.3"/>
</dbReference>
<dbReference type="SMR" id="Q924Z5"/>
<dbReference type="BioGRID" id="228462">
    <property type="interactions" value="2"/>
</dbReference>
<dbReference type="FunCoup" id="Q924Z5">
    <property type="interactions" value="435"/>
</dbReference>
<dbReference type="STRING" id="10090.ENSMUSP00000047992"/>
<dbReference type="GlyCosmos" id="Q924Z5">
    <property type="glycosylation" value="1 site, No reported glycans"/>
</dbReference>
<dbReference type="GlyGen" id="Q924Z5">
    <property type="glycosylation" value="1 site"/>
</dbReference>
<dbReference type="iPTMnet" id="Q924Z5"/>
<dbReference type="PhosphoSitePlus" id="Q924Z5"/>
<dbReference type="jPOST" id="Q924Z5"/>
<dbReference type="PaxDb" id="10090-ENSMUSP00000047992"/>
<dbReference type="PeptideAtlas" id="Q924Z5"/>
<dbReference type="ProteomicsDB" id="258964"/>
<dbReference type="Pumba" id="Q924Z5"/>
<dbReference type="Antibodypedia" id="30914">
    <property type="antibodies" value="165 antibodies from 26 providers"/>
</dbReference>
<dbReference type="DNASU" id="170829"/>
<dbReference type="Ensembl" id="ENSMUST00000037998.6">
    <property type="protein sequence ID" value="ENSMUSP00000047992.5"/>
    <property type="gene ID" value="ENSMUSG00000041779.6"/>
</dbReference>
<dbReference type="GeneID" id="170829"/>
<dbReference type="KEGG" id="mmu:170829"/>
<dbReference type="UCSC" id="uc007alg.2">
    <property type="organism name" value="mouse"/>
</dbReference>
<dbReference type="AGR" id="MGI:1924817"/>
<dbReference type="CTD" id="9697"/>
<dbReference type="MGI" id="MGI:1924817">
    <property type="gene designation" value="Tram2"/>
</dbReference>
<dbReference type="VEuPathDB" id="HostDB:ENSMUSG00000041779"/>
<dbReference type="eggNOG" id="KOG1608">
    <property type="taxonomic scope" value="Eukaryota"/>
</dbReference>
<dbReference type="GeneTree" id="ENSGT00510000046470"/>
<dbReference type="HOGENOM" id="CLU_062830_0_0_1"/>
<dbReference type="InParanoid" id="Q924Z5"/>
<dbReference type="OMA" id="LCRLCML"/>
<dbReference type="OrthoDB" id="3053196at2759"/>
<dbReference type="PhylomeDB" id="Q924Z5"/>
<dbReference type="TreeFam" id="TF314319"/>
<dbReference type="BioGRID-ORCS" id="170829">
    <property type="hits" value="3 hits in 78 CRISPR screens"/>
</dbReference>
<dbReference type="ChiTaRS" id="Tram2">
    <property type="organism name" value="mouse"/>
</dbReference>
<dbReference type="PRO" id="PR:Q924Z5"/>
<dbReference type="Proteomes" id="UP000000589">
    <property type="component" value="Chromosome 1"/>
</dbReference>
<dbReference type="RNAct" id="Q924Z5">
    <property type="molecule type" value="protein"/>
</dbReference>
<dbReference type="Bgee" id="ENSMUSG00000041779">
    <property type="expression patterns" value="Expressed in ascending aorta and 182 other cell types or tissues"/>
</dbReference>
<dbReference type="GO" id="GO:0016020">
    <property type="term" value="C:membrane"/>
    <property type="evidence" value="ECO:0007669"/>
    <property type="project" value="UniProtKB-SubCell"/>
</dbReference>
<dbReference type="GO" id="GO:0032964">
    <property type="term" value="P:collagen biosynthetic process"/>
    <property type="evidence" value="ECO:0007669"/>
    <property type="project" value="Ensembl"/>
</dbReference>
<dbReference type="GO" id="GO:0045048">
    <property type="term" value="P:protein insertion into ER membrane"/>
    <property type="evidence" value="ECO:0000250"/>
    <property type="project" value="UniProtKB"/>
</dbReference>
<dbReference type="GO" id="GO:0006616">
    <property type="term" value="P:SRP-dependent cotranslational protein targeting to membrane, translocation"/>
    <property type="evidence" value="ECO:0007669"/>
    <property type="project" value="InterPro"/>
</dbReference>
<dbReference type="InterPro" id="IPR006634">
    <property type="entry name" value="TLC-dom"/>
</dbReference>
<dbReference type="InterPro" id="IPR016447">
    <property type="entry name" value="Translocation_assoc_membrane"/>
</dbReference>
<dbReference type="PANTHER" id="PTHR12371:SF4">
    <property type="entry name" value="TRANSLOCATING CHAIN-ASSOCIATED MEMBRANE PROTEIN 2"/>
    <property type="match status" value="1"/>
</dbReference>
<dbReference type="PANTHER" id="PTHR12371">
    <property type="entry name" value="TRANSLOCATION ASSOCIATED MEMBRANE PROTEIN"/>
    <property type="match status" value="1"/>
</dbReference>
<dbReference type="Pfam" id="PF03798">
    <property type="entry name" value="TRAM_LAG1_CLN8"/>
    <property type="match status" value="1"/>
</dbReference>
<dbReference type="PIRSF" id="PIRSF005449">
    <property type="entry name" value="Translocation_assoc_membrane"/>
    <property type="match status" value="1"/>
</dbReference>
<dbReference type="SMART" id="SM00724">
    <property type="entry name" value="TLC"/>
    <property type="match status" value="1"/>
</dbReference>
<dbReference type="PROSITE" id="PS50922">
    <property type="entry name" value="TLC"/>
    <property type="match status" value="1"/>
</dbReference>
<reference key="1">
    <citation type="submission" date="2001-04" db="EMBL/GenBank/DDBJ databases">
        <authorList>
            <person name="Hartmann E."/>
        </authorList>
    </citation>
    <scope>NUCLEOTIDE SEQUENCE [MRNA]</scope>
</reference>
<reference key="2">
    <citation type="journal article" date="2005" name="Science">
        <title>The transcriptional landscape of the mammalian genome.</title>
        <authorList>
            <person name="Carninci P."/>
            <person name="Kasukawa T."/>
            <person name="Katayama S."/>
            <person name="Gough J."/>
            <person name="Frith M.C."/>
            <person name="Maeda N."/>
            <person name="Oyama R."/>
            <person name="Ravasi T."/>
            <person name="Lenhard B."/>
            <person name="Wells C."/>
            <person name="Kodzius R."/>
            <person name="Shimokawa K."/>
            <person name="Bajic V.B."/>
            <person name="Brenner S.E."/>
            <person name="Batalov S."/>
            <person name="Forrest A.R."/>
            <person name="Zavolan M."/>
            <person name="Davis M.J."/>
            <person name="Wilming L.G."/>
            <person name="Aidinis V."/>
            <person name="Allen J.E."/>
            <person name="Ambesi-Impiombato A."/>
            <person name="Apweiler R."/>
            <person name="Aturaliya R.N."/>
            <person name="Bailey T.L."/>
            <person name="Bansal M."/>
            <person name="Baxter L."/>
            <person name="Beisel K.W."/>
            <person name="Bersano T."/>
            <person name="Bono H."/>
            <person name="Chalk A.M."/>
            <person name="Chiu K.P."/>
            <person name="Choudhary V."/>
            <person name="Christoffels A."/>
            <person name="Clutterbuck D.R."/>
            <person name="Crowe M.L."/>
            <person name="Dalla E."/>
            <person name="Dalrymple B.P."/>
            <person name="de Bono B."/>
            <person name="Della Gatta G."/>
            <person name="di Bernardo D."/>
            <person name="Down T."/>
            <person name="Engstrom P."/>
            <person name="Fagiolini M."/>
            <person name="Faulkner G."/>
            <person name="Fletcher C.F."/>
            <person name="Fukushima T."/>
            <person name="Furuno M."/>
            <person name="Futaki S."/>
            <person name="Gariboldi M."/>
            <person name="Georgii-Hemming P."/>
            <person name="Gingeras T.R."/>
            <person name="Gojobori T."/>
            <person name="Green R.E."/>
            <person name="Gustincich S."/>
            <person name="Harbers M."/>
            <person name="Hayashi Y."/>
            <person name="Hensch T.K."/>
            <person name="Hirokawa N."/>
            <person name="Hill D."/>
            <person name="Huminiecki L."/>
            <person name="Iacono M."/>
            <person name="Ikeo K."/>
            <person name="Iwama A."/>
            <person name="Ishikawa T."/>
            <person name="Jakt M."/>
            <person name="Kanapin A."/>
            <person name="Katoh M."/>
            <person name="Kawasawa Y."/>
            <person name="Kelso J."/>
            <person name="Kitamura H."/>
            <person name="Kitano H."/>
            <person name="Kollias G."/>
            <person name="Krishnan S.P."/>
            <person name="Kruger A."/>
            <person name="Kummerfeld S.K."/>
            <person name="Kurochkin I.V."/>
            <person name="Lareau L.F."/>
            <person name="Lazarevic D."/>
            <person name="Lipovich L."/>
            <person name="Liu J."/>
            <person name="Liuni S."/>
            <person name="McWilliam S."/>
            <person name="Madan Babu M."/>
            <person name="Madera M."/>
            <person name="Marchionni L."/>
            <person name="Matsuda H."/>
            <person name="Matsuzawa S."/>
            <person name="Miki H."/>
            <person name="Mignone F."/>
            <person name="Miyake S."/>
            <person name="Morris K."/>
            <person name="Mottagui-Tabar S."/>
            <person name="Mulder N."/>
            <person name="Nakano N."/>
            <person name="Nakauchi H."/>
            <person name="Ng P."/>
            <person name="Nilsson R."/>
            <person name="Nishiguchi S."/>
            <person name="Nishikawa S."/>
            <person name="Nori F."/>
            <person name="Ohara O."/>
            <person name="Okazaki Y."/>
            <person name="Orlando V."/>
            <person name="Pang K.C."/>
            <person name="Pavan W.J."/>
            <person name="Pavesi G."/>
            <person name="Pesole G."/>
            <person name="Petrovsky N."/>
            <person name="Piazza S."/>
            <person name="Reed J."/>
            <person name="Reid J.F."/>
            <person name="Ring B.Z."/>
            <person name="Ringwald M."/>
            <person name="Rost B."/>
            <person name="Ruan Y."/>
            <person name="Salzberg S.L."/>
            <person name="Sandelin A."/>
            <person name="Schneider C."/>
            <person name="Schoenbach C."/>
            <person name="Sekiguchi K."/>
            <person name="Semple C.A."/>
            <person name="Seno S."/>
            <person name="Sessa L."/>
            <person name="Sheng Y."/>
            <person name="Shibata Y."/>
            <person name="Shimada H."/>
            <person name="Shimada K."/>
            <person name="Silva D."/>
            <person name="Sinclair B."/>
            <person name="Sperling S."/>
            <person name="Stupka E."/>
            <person name="Sugiura K."/>
            <person name="Sultana R."/>
            <person name="Takenaka Y."/>
            <person name="Taki K."/>
            <person name="Tammoja K."/>
            <person name="Tan S.L."/>
            <person name="Tang S."/>
            <person name="Taylor M.S."/>
            <person name="Tegner J."/>
            <person name="Teichmann S.A."/>
            <person name="Ueda H.R."/>
            <person name="van Nimwegen E."/>
            <person name="Verardo R."/>
            <person name="Wei C.L."/>
            <person name="Yagi K."/>
            <person name="Yamanishi H."/>
            <person name="Zabarovsky E."/>
            <person name="Zhu S."/>
            <person name="Zimmer A."/>
            <person name="Hide W."/>
            <person name="Bult C."/>
            <person name="Grimmond S.M."/>
            <person name="Teasdale R.D."/>
            <person name="Liu E.T."/>
            <person name="Brusic V."/>
            <person name="Quackenbush J."/>
            <person name="Wahlestedt C."/>
            <person name="Mattick J.S."/>
            <person name="Hume D.A."/>
            <person name="Kai C."/>
            <person name="Sasaki D."/>
            <person name="Tomaru Y."/>
            <person name="Fukuda S."/>
            <person name="Kanamori-Katayama M."/>
            <person name="Suzuki M."/>
            <person name="Aoki J."/>
            <person name="Arakawa T."/>
            <person name="Iida J."/>
            <person name="Imamura K."/>
            <person name="Itoh M."/>
            <person name="Kato T."/>
            <person name="Kawaji H."/>
            <person name="Kawagashira N."/>
            <person name="Kawashima T."/>
            <person name="Kojima M."/>
            <person name="Kondo S."/>
            <person name="Konno H."/>
            <person name="Nakano K."/>
            <person name="Ninomiya N."/>
            <person name="Nishio T."/>
            <person name="Okada M."/>
            <person name="Plessy C."/>
            <person name="Shibata K."/>
            <person name="Shiraki T."/>
            <person name="Suzuki S."/>
            <person name="Tagami M."/>
            <person name="Waki K."/>
            <person name="Watahiki A."/>
            <person name="Okamura-Oho Y."/>
            <person name="Suzuki H."/>
            <person name="Kawai J."/>
            <person name="Hayashizaki Y."/>
        </authorList>
    </citation>
    <scope>NUCLEOTIDE SEQUENCE [LARGE SCALE MRNA]</scope>
    <source>
        <strain>C57BL/6J</strain>
    </source>
</reference>
<reference key="3">
    <citation type="journal article" date="2004" name="Genome Res.">
        <title>The status, quality, and expansion of the NIH full-length cDNA project: the Mammalian Gene Collection (MGC).</title>
        <authorList>
            <consortium name="The MGC Project Team"/>
        </authorList>
    </citation>
    <scope>NUCLEOTIDE SEQUENCE [LARGE SCALE MRNA]</scope>
</reference>
<reference key="4">
    <citation type="journal article" date="2004" name="Mol. Cell. Biol.">
        <title>TRAM2 protein interacts with endoplasmic reticulum Ca2+ pump Serca2b and is necessary for collagen type I synthesis.</title>
        <authorList>
            <person name="Stefanovic B."/>
            <person name="Stefanovic L."/>
            <person name="Schnabl B."/>
            <person name="Bataller R."/>
            <person name="Brenner D.A."/>
        </authorList>
    </citation>
    <scope>INTERACTION WITH SERCA2B</scope>
</reference>
<proteinExistence type="evidence at protein level"/>
<accession>Q924Z5</accession>
<comment type="function">
    <text evidence="2">Necessary for collagen type I synthesis. May couple the activity of the ER Ca(2+) pump SERCA2B with the activity of the translocon. This coupling may increase the local Ca(2+) concentration at the site of collagen synthesis, and a high Ca(2+) concentration may be necessary for the function of molecular chaperones involved in collagen folding. Required for proper insertion of the first transmembrane helix N-terminus of TM4SF20 into the ER lumen, may act as a ceramide sensor for regulated alternative translocation (RAT).</text>
</comment>
<comment type="subunit">
    <text evidence="1 6">Interacts with COL1A1 (By similarity). Interacts with SERCA2B.</text>
</comment>
<comment type="subcellular location">
    <subcellularLocation>
        <location evidence="7">Membrane</location>
        <topology evidence="3">Multi-pass membrane protein</topology>
    </subcellularLocation>
</comment>
<comment type="similarity">
    <text evidence="7">Belongs to the TRAM family.</text>
</comment>
<feature type="chain" id="PRO_0000185533" description="Translocating chain-associated membrane protein 2">
    <location>
        <begin position="1"/>
        <end position="370"/>
    </location>
</feature>
<feature type="topological domain" description="Cytoplasmic" evidence="7">
    <location>
        <begin position="1"/>
        <end position="22"/>
    </location>
</feature>
<feature type="transmembrane region" description="Helical" evidence="3">
    <location>
        <begin position="23"/>
        <end position="43"/>
    </location>
</feature>
<feature type="topological domain" description="Extracellular" evidence="7">
    <location>
        <begin position="44"/>
        <end position="75"/>
    </location>
</feature>
<feature type="transmembrane region" description="Helical" evidence="3">
    <location>
        <begin position="76"/>
        <end position="96"/>
    </location>
</feature>
<feature type="topological domain" description="Cytoplasmic" evidence="7">
    <location>
        <begin position="97"/>
        <end position="119"/>
    </location>
</feature>
<feature type="transmembrane region" description="Helical" evidence="3">
    <location>
        <begin position="120"/>
        <end position="140"/>
    </location>
</feature>
<feature type="topological domain" description="Extracellular" evidence="7">
    <location>
        <begin position="141"/>
        <end position="159"/>
    </location>
</feature>
<feature type="transmembrane region" description="Helical" evidence="3">
    <location>
        <begin position="160"/>
        <end position="180"/>
    </location>
</feature>
<feature type="topological domain" description="Cytoplasmic" evidence="7">
    <location>
        <begin position="181"/>
        <end position="191"/>
    </location>
</feature>
<feature type="transmembrane region" description="Helical" evidence="3">
    <location>
        <begin position="192"/>
        <end position="209"/>
    </location>
</feature>
<feature type="topological domain" description="Extracellular" evidence="7">
    <location>
        <begin position="210"/>
        <end position="214"/>
    </location>
</feature>
<feature type="transmembrane region" description="Helical" evidence="3">
    <location>
        <begin position="215"/>
        <end position="235"/>
    </location>
</feature>
<feature type="topological domain" description="Cytoplasmic" evidence="7">
    <location>
        <begin position="236"/>
        <end position="250"/>
    </location>
</feature>
<feature type="transmembrane region" description="Helical" evidence="3">
    <location>
        <begin position="251"/>
        <end position="271"/>
    </location>
</feature>
<feature type="topological domain" description="Extracellular" evidence="7">
    <location>
        <begin position="272"/>
        <end position="287"/>
    </location>
</feature>
<feature type="transmembrane region" description="Helical" evidence="3">
    <location>
        <begin position="288"/>
        <end position="308"/>
    </location>
</feature>
<feature type="topological domain" description="Cytoplasmic" evidence="7">
    <location>
        <begin position="309"/>
        <end position="370"/>
    </location>
</feature>
<feature type="domain" description="TLC" evidence="4">
    <location>
        <begin position="112"/>
        <end position="321"/>
    </location>
</feature>
<feature type="region of interest" description="Disordered" evidence="5">
    <location>
        <begin position="332"/>
        <end position="370"/>
    </location>
</feature>
<feature type="glycosylation site" description="N-linked (GlcNAc...) asparagine" evidence="3">
    <location>
        <position position="55"/>
    </location>
</feature>
<protein>
    <recommendedName>
        <fullName>Translocating chain-associated membrane protein 2</fullName>
    </recommendedName>
</protein>
<name>TRAM2_MOUSE</name>
<keyword id="KW-0325">Glycoprotein</keyword>
<keyword id="KW-0472">Membrane</keyword>
<keyword id="KW-0653">Protein transport</keyword>
<keyword id="KW-1185">Reference proteome</keyword>
<keyword id="KW-0811">Translocation</keyword>
<keyword id="KW-0812">Transmembrane</keyword>
<keyword id="KW-1133">Transmembrane helix</keyword>
<keyword id="KW-0813">Transport</keyword>
<evidence type="ECO:0000250" key="1"/>
<evidence type="ECO:0000250" key="2">
    <source>
        <dbReference type="UniProtKB" id="Q15035"/>
    </source>
</evidence>
<evidence type="ECO:0000255" key="3"/>
<evidence type="ECO:0000255" key="4">
    <source>
        <dbReference type="PROSITE-ProRule" id="PRU00205"/>
    </source>
</evidence>
<evidence type="ECO:0000256" key="5">
    <source>
        <dbReference type="SAM" id="MobiDB-lite"/>
    </source>
</evidence>
<evidence type="ECO:0000269" key="6">
    <source>
    </source>
</evidence>
<evidence type="ECO:0000305" key="7"/>
<gene>
    <name type="primary">Tram2</name>
</gene>
<organism>
    <name type="scientific">Mus musculus</name>
    <name type="common">Mouse</name>
    <dbReference type="NCBI Taxonomy" id="10090"/>
    <lineage>
        <taxon>Eukaryota</taxon>
        <taxon>Metazoa</taxon>
        <taxon>Chordata</taxon>
        <taxon>Craniata</taxon>
        <taxon>Vertebrata</taxon>
        <taxon>Euteleostomi</taxon>
        <taxon>Mammalia</taxon>
        <taxon>Eutheria</taxon>
        <taxon>Euarchontoglires</taxon>
        <taxon>Glires</taxon>
        <taxon>Rodentia</taxon>
        <taxon>Myomorpha</taxon>
        <taxon>Muroidea</taxon>
        <taxon>Muridae</taxon>
        <taxon>Murinae</taxon>
        <taxon>Mus</taxon>
        <taxon>Mus</taxon>
    </lineage>
</organism>